<proteinExistence type="inferred from homology"/>
<dbReference type="EMBL" id="AE014299">
    <property type="protein sequence ID" value="AAN57717.1"/>
    <property type="molecule type" value="Genomic_DNA"/>
</dbReference>
<dbReference type="RefSeq" id="NP_720274.1">
    <property type="nucleotide sequence ID" value="NC_004347.2"/>
</dbReference>
<dbReference type="RefSeq" id="WP_011074340.1">
    <property type="nucleotide sequence ID" value="NC_004347.2"/>
</dbReference>
<dbReference type="SMR" id="Q8E8A9"/>
<dbReference type="STRING" id="211586.SO_4758"/>
<dbReference type="PaxDb" id="211586-SO_4758"/>
<dbReference type="KEGG" id="son:SO_4758"/>
<dbReference type="PATRIC" id="fig|211586.12.peg.4615"/>
<dbReference type="eggNOG" id="COG0445">
    <property type="taxonomic scope" value="Bacteria"/>
</dbReference>
<dbReference type="HOGENOM" id="CLU_007831_2_2_6"/>
<dbReference type="OrthoDB" id="9815560at2"/>
<dbReference type="PhylomeDB" id="Q8E8A9"/>
<dbReference type="BioCyc" id="SONE211586:G1GMP-4403-MONOMER"/>
<dbReference type="Proteomes" id="UP000008186">
    <property type="component" value="Chromosome"/>
</dbReference>
<dbReference type="GO" id="GO:0005829">
    <property type="term" value="C:cytosol"/>
    <property type="evidence" value="ECO:0000318"/>
    <property type="project" value="GO_Central"/>
</dbReference>
<dbReference type="GO" id="GO:0050660">
    <property type="term" value="F:flavin adenine dinucleotide binding"/>
    <property type="evidence" value="ECO:0000318"/>
    <property type="project" value="GO_Central"/>
</dbReference>
<dbReference type="GO" id="GO:0030488">
    <property type="term" value="P:tRNA methylation"/>
    <property type="evidence" value="ECO:0000318"/>
    <property type="project" value="GO_Central"/>
</dbReference>
<dbReference type="GO" id="GO:0002098">
    <property type="term" value="P:tRNA wobble uridine modification"/>
    <property type="evidence" value="ECO:0000318"/>
    <property type="project" value="GO_Central"/>
</dbReference>
<dbReference type="FunFam" id="1.10.10.1800:FF:000001">
    <property type="entry name" value="tRNA uridine 5-carboxymethylaminomethyl modification enzyme MnmG"/>
    <property type="match status" value="1"/>
</dbReference>
<dbReference type="FunFam" id="1.10.150.570:FF:000001">
    <property type="entry name" value="tRNA uridine 5-carboxymethylaminomethyl modification enzyme MnmG"/>
    <property type="match status" value="1"/>
</dbReference>
<dbReference type="FunFam" id="3.50.50.60:FF:000002">
    <property type="entry name" value="tRNA uridine 5-carboxymethylaminomethyl modification enzyme MnmG"/>
    <property type="match status" value="1"/>
</dbReference>
<dbReference type="FunFam" id="3.50.50.60:FF:000010">
    <property type="entry name" value="tRNA uridine 5-carboxymethylaminomethyl modification enzyme MnmG"/>
    <property type="match status" value="1"/>
</dbReference>
<dbReference type="Gene3D" id="3.50.50.60">
    <property type="entry name" value="FAD/NAD(P)-binding domain"/>
    <property type="match status" value="2"/>
</dbReference>
<dbReference type="Gene3D" id="1.10.150.570">
    <property type="entry name" value="GidA associated domain, C-terminal subdomain"/>
    <property type="match status" value="1"/>
</dbReference>
<dbReference type="Gene3D" id="1.10.10.1800">
    <property type="entry name" value="tRNA uridine 5-carboxymethylaminomethyl modification enzyme MnmG/GidA"/>
    <property type="match status" value="1"/>
</dbReference>
<dbReference type="HAMAP" id="MF_00129">
    <property type="entry name" value="MnmG_GidA"/>
    <property type="match status" value="1"/>
</dbReference>
<dbReference type="InterPro" id="IPR036188">
    <property type="entry name" value="FAD/NAD-bd_sf"/>
</dbReference>
<dbReference type="InterPro" id="IPR049312">
    <property type="entry name" value="GIDA_C_N"/>
</dbReference>
<dbReference type="InterPro" id="IPR004416">
    <property type="entry name" value="MnmG"/>
</dbReference>
<dbReference type="InterPro" id="IPR002218">
    <property type="entry name" value="MnmG-rel"/>
</dbReference>
<dbReference type="InterPro" id="IPR020595">
    <property type="entry name" value="MnmG-rel_CS"/>
</dbReference>
<dbReference type="InterPro" id="IPR026904">
    <property type="entry name" value="MnmG_C"/>
</dbReference>
<dbReference type="InterPro" id="IPR047001">
    <property type="entry name" value="MnmG_C_subdom"/>
</dbReference>
<dbReference type="InterPro" id="IPR044920">
    <property type="entry name" value="MnmG_C_subdom_sf"/>
</dbReference>
<dbReference type="InterPro" id="IPR040131">
    <property type="entry name" value="MnmG_N"/>
</dbReference>
<dbReference type="NCBIfam" id="TIGR00136">
    <property type="entry name" value="mnmG_gidA"/>
    <property type="match status" value="1"/>
</dbReference>
<dbReference type="PANTHER" id="PTHR11806">
    <property type="entry name" value="GLUCOSE INHIBITED DIVISION PROTEIN A"/>
    <property type="match status" value="1"/>
</dbReference>
<dbReference type="PANTHER" id="PTHR11806:SF0">
    <property type="entry name" value="PROTEIN MTO1 HOMOLOG, MITOCHONDRIAL"/>
    <property type="match status" value="1"/>
</dbReference>
<dbReference type="Pfam" id="PF01134">
    <property type="entry name" value="GIDA"/>
    <property type="match status" value="1"/>
</dbReference>
<dbReference type="Pfam" id="PF21680">
    <property type="entry name" value="GIDA_C_1st"/>
    <property type="match status" value="1"/>
</dbReference>
<dbReference type="Pfam" id="PF13932">
    <property type="entry name" value="SAM_GIDA_C"/>
    <property type="match status" value="1"/>
</dbReference>
<dbReference type="SMART" id="SM01228">
    <property type="entry name" value="GIDA_assoc_3"/>
    <property type="match status" value="1"/>
</dbReference>
<dbReference type="SUPFAM" id="SSF51905">
    <property type="entry name" value="FAD/NAD(P)-binding domain"/>
    <property type="match status" value="1"/>
</dbReference>
<dbReference type="PROSITE" id="PS01280">
    <property type="entry name" value="GIDA_1"/>
    <property type="match status" value="1"/>
</dbReference>
<dbReference type="PROSITE" id="PS01281">
    <property type="entry name" value="GIDA_2"/>
    <property type="match status" value="1"/>
</dbReference>
<feature type="chain" id="PRO_0000117172" description="tRNA uridine 5-carboxymethylaminomethyl modification enzyme MnmG">
    <location>
        <begin position="1"/>
        <end position="629"/>
    </location>
</feature>
<feature type="binding site" evidence="1">
    <location>
        <begin position="13"/>
        <end position="18"/>
    </location>
    <ligand>
        <name>FAD</name>
        <dbReference type="ChEBI" id="CHEBI:57692"/>
    </ligand>
</feature>
<feature type="binding site" evidence="1">
    <location>
        <position position="125"/>
    </location>
    <ligand>
        <name>FAD</name>
        <dbReference type="ChEBI" id="CHEBI:57692"/>
    </ligand>
</feature>
<feature type="binding site" evidence="1">
    <location>
        <position position="180"/>
    </location>
    <ligand>
        <name>FAD</name>
        <dbReference type="ChEBI" id="CHEBI:57692"/>
    </ligand>
</feature>
<feature type="binding site" evidence="1">
    <location>
        <begin position="273"/>
        <end position="287"/>
    </location>
    <ligand>
        <name>NAD(+)</name>
        <dbReference type="ChEBI" id="CHEBI:57540"/>
    </ligand>
</feature>
<feature type="binding site" evidence="1">
    <location>
        <position position="370"/>
    </location>
    <ligand>
        <name>FAD</name>
        <dbReference type="ChEBI" id="CHEBI:57692"/>
    </ligand>
</feature>
<sequence length="629" mass="69250">MHFHERFDVIVVGGGHAGTEAALAAARMGSKTLLLTHNLDTLGQMSCNPAIGGIGKGHLVKEIDALGGAMAIATDYAGIQFRTLNSSKGPAVRATRAQADRALYRQKIQNILQNQANLRIFQQAVDDIVVENDHVVGVVTQMGLAFEASAVVLTAGTFLSGKIHIGLENYSGGRAGDPPSIALAHRLRELPIRVGRLKTGTPPRIDANTIDFSQMTEQKGDTPLPVMSFMGDVSHHPKQISCWITHTNEKTHDIIRGGLDRSPMYSGVIEGIGPRYCPSIEDKIHRFSDKSSHQIFIEPEGLTTNEIYPNGISTSLPFDVQLNLVRSIKGMENAEIVRPGYAIEYDYFDPRDLKNSLETKTINGLFFAGQINGTTGYEEAGAQGLLAGMNASLQVQGKEAWCPRRDEAYIGVLVDDLSTLGTKEPYRMFTSRAEYRLLLREDNADLRLTAKGRELGLVDDARWAAFSEKMESIELELQRLRSQWIHPNSPLVPVLNPHLNTPISREASFEELLRRPEMDYNKLMQIEGFGPGLADPLAAEQVQIQVKYSGYIQRQQEEINKAVRNENTGLPLNLDYKEVPGLSNEVIAKLNSHKPETIGQASRISGITPAAISILLVHLKKRGLLRKSA</sequence>
<organism>
    <name type="scientific">Shewanella oneidensis (strain ATCC 700550 / JCM 31522 / CIP 106686 / LMG 19005 / NCIMB 14063 / MR-1)</name>
    <dbReference type="NCBI Taxonomy" id="211586"/>
    <lineage>
        <taxon>Bacteria</taxon>
        <taxon>Pseudomonadati</taxon>
        <taxon>Pseudomonadota</taxon>
        <taxon>Gammaproteobacteria</taxon>
        <taxon>Alteromonadales</taxon>
        <taxon>Shewanellaceae</taxon>
        <taxon>Shewanella</taxon>
    </lineage>
</organism>
<evidence type="ECO:0000255" key="1">
    <source>
        <dbReference type="HAMAP-Rule" id="MF_00129"/>
    </source>
</evidence>
<reference key="1">
    <citation type="journal article" date="2002" name="Nat. Biotechnol.">
        <title>Genome sequence of the dissimilatory metal ion-reducing bacterium Shewanella oneidensis.</title>
        <authorList>
            <person name="Heidelberg J.F."/>
            <person name="Paulsen I.T."/>
            <person name="Nelson K.E."/>
            <person name="Gaidos E.J."/>
            <person name="Nelson W.C."/>
            <person name="Read T.D."/>
            <person name="Eisen J.A."/>
            <person name="Seshadri R."/>
            <person name="Ward N.L."/>
            <person name="Methe B.A."/>
            <person name="Clayton R.A."/>
            <person name="Meyer T."/>
            <person name="Tsapin A."/>
            <person name="Scott J."/>
            <person name="Beanan M.J."/>
            <person name="Brinkac L.M."/>
            <person name="Daugherty S.C."/>
            <person name="DeBoy R.T."/>
            <person name="Dodson R.J."/>
            <person name="Durkin A.S."/>
            <person name="Haft D.H."/>
            <person name="Kolonay J.F."/>
            <person name="Madupu R."/>
            <person name="Peterson J.D."/>
            <person name="Umayam L.A."/>
            <person name="White O."/>
            <person name="Wolf A.M."/>
            <person name="Vamathevan J.J."/>
            <person name="Weidman J.F."/>
            <person name="Impraim M."/>
            <person name="Lee K."/>
            <person name="Berry K.J."/>
            <person name="Lee C."/>
            <person name="Mueller J."/>
            <person name="Khouri H.M."/>
            <person name="Gill J."/>
            <person name="Utterback T.R."/>
            <person name="McDonald L.A."/>
            <person name="Feldblyum T.V."/>
            <person name="Smith H.O."/>
            <person name="Venter J.C."/>
            <person name="Nealson K.H."/>
            <person name="Fraser C.M."/>
        </authorList>
    </citation>
    <scope>NUCLEOTIDE SEQUENCE [LARGE SCALE GENOMIC DNA]</scope>
    <source>
        <strain>ATCC 700550 / JCM 31522 / CIP 106686 / LMG 19005 / NCIMB 14063 / MR-1</strain>
    </source>
</reference>
<accession>Q8E8A9</accession>
<name>MNMG_SHEON</name>
<protein>
    <recommendedName>
        <fullName evidence="1">tRNA uridine 5-carboxymethylaminomethyl modification enzyme MnmG</fullName>
    </recommendedName>
    <alternativeName>
        <fullName evidence="1">Glucose-inhibited division protein A</fullName>
    </alternativeName>
</protein>
<keyword id="KW-0963">Cytoplasm</keyword>
<keyword id="KW-0274">FAD</keyword>
<keyword id="KW-0285">Flavoprotein</keyword>
<keyword id="KW-0520">NAD</keyword>
<keyword id="KW-1185">Reference proteome</keyword>
<keyword id="KW-0819">tRNA processing</keyword>
<gene>
    <name evidence="1" type="primary">mnmG</name>
    <name evidence="1" type="synonym">gidA</name>
    <name type="ordered locus">SO_4758</name>
</gene>
<comment type="function">
    <text evidence="1">NAD-binding protein involved in the addition of a carboxymethylaminomethyl (cmnm) group at the wobble position (U34) of certain tRNAs, forming tRNA-cmnm(5)s(2)U34.</text>
</comment>
<comment type="cofactor">
    <cofactor evidence="1">
        <name>FAD</name>
        <dbReference type="ChEBI" id="CHEBI:57692"/>
    </cofactor>
</comment>
<comment type="subunit">
    <text evidence="1">Homodimer. Heterotetramer of two MnmE and two MnmG subunits.</text>
</comment>
<comment type="subcellular location">
    <subcellularLocation>
        <location evidence="1">Cytoplasm</location>
    </subcellularLocation>
</comment>
<comment type="similarity">
    <text evidence="1">Belongs to the MnmG family.</text>
</comment>